<dbReference type="EC" id="1.7.1.7" evidence="1"/>
<dbReference type="EMBL" id="FM180568">
    <property type="protein sequence ID" value="CAS07656.1"/>
    <property type="molecule type" value="Genomic_DNA"/>
</dbReference>
<dbReference type="RefSeq" id="WP_001217338.1">
    <property type="nucleotide sequence ID" value="NC_011601.1"/>
</dbReference>
<dbReference type="SMR" id="B7UIF3"/>
<dbReference type="GeneID" id="93777331"/>
<dbReference type="KEGG" id="ecg:E2348C_0108"/>
<dbReference type="HOGENOM" id="CLU_022552_5_3_6"/>
<dbReference type="Proteomes" id="UP000008205">
    <property type="component" value="Chromosome"/>
</dbReference>
<dbReference type="GO" id="GO:0005829">
    <property type="term" value="C:cytosol"/>
    <property type="evidence" value="ECO:0007669"/>
    <property type="project" value="TreeGrafter"/>
</dbReference>
<dbReference type="GO" id="GO:1902560">
    <property type="term" value="C:GMP reductase complex"/>
    <property type="evidence" value="ECO:0007669"/>
    <property type="project" value="InterPro"/>
</dbReference>
<dbReference type="GO" id="GO:0003920">
    <property type="term" value="F:GMP reductase activity"/>
    <property type="evidence" value="ECO:0007669"/>
    <property type="project" value="UniProtKB-UniRule"/>
</dbReference>
<dbReference type="GO" id="GO:0046872">
    <property type="term" value="F:metal ion binding"/>
    <property type="evidence" value="ECO:0007669"/>
    <property type="project" value="UniProtKB-KW"/>
</dbReference>
<dbReference type="GO" id="GO:0006163">
    <property type="term" value="P:purine nucleotide metabolic process"/>
    <property type="evidence" value="ECO:0007669"/>
    <property type="project" value="UniProtKB-UniRule"/>
</dbReference>
<dbReference type="CDD" id="cd00381">
    <property type="entry name" value="IMPDH"/>
    <property type="match status" value="1"/>
</dbReference>
<dbReference type="FunFam" id="3.20.20.70:FF:000012">
    <property type="entry name" value="GMP reductase"/>
    <property type="match status" value="1"/>
</dbReference>
<dbReference type="Gene3D" id="3.20.20.70">
    <property type="entry name" value="Aldolase class I"/>
    <property type="match status" value="1"/>
</dbReference>
<dbReference type="HAMAP" id="MF_00596">
    <property type="entry name" value="GMP_reduct_type1"/>
    <property type="match status" value="1"/>
</dbReference>
<dbReference type="InterPro" id="IPR013785">
    <property type="entry name" value="Aldolase_TIM"/>
</dbReference>
<dbReference type="InterPro" id="IPR050139">
    <property type="entry name" value="GMP_reductase"/>
</dbReference>
<dbReference type="InterPro" id="IPR005993">
    <property type="entry name" value="GMPR"/>
</dbReference>
<dbReference type="InterPro" id="IPR015875">
    <property type="entry name" value="IMP_DH/GMP_Rdtase_CS"/>
</dbReference>
<dbReference type="InterPro" id="IPR001093">
    <property type="entry name" value="IMP_DH_GMPRt"/>
</dbReference>
<dbReference type="NCBIfam" id="TIGR01305">
    <property type="entry name" value="GMP_reduct_1"/>
    <property type="match status" value="1"/>
</dbReference>
<dbReference type="NCBIfam" id="NF003470">
    <property type="entry name" value="PRK05096.1"/>
    <property type="match status" value="1"/>
</dbReference>
<dbReference type="PANTHER" id="PTHR43170">
    <property type="entry name" value="GMP REDUCTASE"/>
    <property type="match status" value="1"/>
</dbReference>
<dbReference type="PANTHER" id="PTHR43170:SF5">
    <property type="entry name" value="GMP REDUCTASE"/>
    <property type="match status" value="1"/>
</dbReference>
<dbReference type="Pfam" id="PF00478">
    <property type="entry name" value="IMPDH"/>
    <property type="match status" value="1"/>
</dbReference>
<dbReference type="PIRSF" id="PIRSF000235">
    <property type="entry name" value="GMP_reductase"/>
    <property type="match status" value="1"/>
</dbReference>
<dbReference type="SMART" id="SM01240">
    <property type="entry name" value="IMPDH"/>
    <property type="match status" value="1"/>
</dbReference>
<dbReference type="SUPFAM" id="SSF51412">
    <property type="entry name" value="Inosine monophosphate dehydrogenase (IMPDH)"/>
    <property type="match status" value="1"/>
</dbReference>
<dbReference type="PROSITE" id="PS00487">
    <property type="entry name" value="IMP_DH_GMP_RED"/>
    <property type="match status" value="1"/>
</dbReference>
<feature type="chain" id="PRO_1000146985" description="GMP reductase">
    <location>
        <begin position="1"/>
        <end position="347"/>
    </location>
</feature>
<feature type="active site" description="Thioimidate intermediate" evidence="1">
    <location>
        <position position="186"/>
    </location>
</feature>
<feature type="binding site" evidence="1">
    <location>
        <begin position="108"/>
        <end position="131"/>
    </location>
    <ligand>
        <name>NADP(+)</name>
        <dbReference type="ChEBI" id="CHEBI:58349"/>
    </ligand>
</feature>
<feature type="binding site" evidence="1">
    <location>
        <position position="181"/>
    </location>
    <ligand>
        <name>K(+)</name>
        <dbReference type="ChEBI" id="CHEBI:29103"/>
    </ligand>
</feature>
<feature type="binding site" evidence="1">
    <location>
        <position position="183"/>
    </location>
    <ligand>
        <name>K(+)</name>
        <dbReference type="ChEBI" id="CHEBI:29103"/>
    </ligand>
</feature>
<feature type="binding site" evidence="1">
    <location>
        <begin position="216"/>
        <end position="239"/>
    </location>
    <ligand>
        <name>NADP(+)</name>
        <dbReference type="ChEBI" id="CHEBI:58349"/>
    </ligand>
</feature>
<sequence length="347" mass="37384">MRIEEDLKLGFKDVLIRPKRSTLKSRSDVELERQFTFKHSGQSWSGVPIIAANMDTVGTFSMASALASFDILTAVHKHYSVEEWQAFINNSSADVLKHVMVSTGTSDADFEKTKQILDLNPALNFVCIDVANGYSEHFVQFVAKAREAWPTKTICAGNVVTGEMCEELILSGADIVKVGIGPGSVCTTRVKTGVGYPQLSAVIECADAAHGLGGMIVSDGGCTTPGDVAKAFGGGADFVMLGGMLAGHEESGGRIVEENGEKFMLFYGMSSESAMKRHVGGVAEYRAAEGKTVKLPLRGPVENTARDILGGLRSACTYVGASRLKELTKRTTFIRVQEQENRIFNNL</sequence>
<accession>B7UIF3</accession>
<evidence type="ECO:0000255" key="1">
    <source>
        <dbReference type="HAMAP-Rule" id="MF_00596"/>
    </source>
</evidence>
<name>GUAC_ECO27</name>
<gene>
    <name evidence="1" type="primary">guaC</name>
    <name type="ordered locus">E2348C_0108</name>
</gene>
<reference key="1">
    <citation type="journal article" date="2009" name="J. Bacteriol.">
        <title>Complete genome sequence and comparative genome analysis of enteropathogenic Escherichia coli O127:H6 strain E2348/69.</title>
        <authorList>
            <person name="Iguchi A."/>
            <person name="Thomson N.R."/>
            <person name="Ogura Y."/>
            <person name="Saunders D."/>
            <person name="Ooka T."/>
            <person name="Henderson I.R."/>
            <person name="Harris D."/>
            <person name="Asadulghani M."/>
            <person name="Kurokawa K."/>
            <person name="Dean P."/>
            <person name="Kenny B."/>
            <person name="Quail M.A."/>
            <person name="Thurston S."/>
            <person name="Dougan G."/>
            <person name="Hayashi T."/>
            <person name="Parkhill J."/>
            <person name="Frankel G."/>
        </authorList>
    </citation>
    <scope>NUCLEOTIDE SEQUENCE [LARGE SCALE GENOMIC DNA]</scope>
    <source>
        <strain>E2348/69 / EPEC</strain>
    </source>
</reference>
<protein>
    <recommendedName>
        <fullName evidence="1">GMP reductase</fullName>
        <ecNumber evidence="1">1.7.1.7</ecNumber>
    </recommendedName>
    <alternativeName>
        <fullName evidence="1">Guanosine 5'-monophosphate oxidoreductase</fullName>
        <shortName evidence="1">Guanosine monophosphate reductase</shortName>
    </alternativeName>
</protein>
<keyword id="KW-0479">Metal-binding</keyword>
<keyword id="KW-0521">NADP</keyword>
<keyword id="KW-0560">Oxidoreductase</keyword>
<keyword id="KW-0630">Potassium</keyword>
<keyword id="KW-1185">Reference proteome</keyword>
<comment type="function">
    <text evidence="1">Catalyzes the irreversible NADPH-dependent deamination of GMP to IMP. It functions in the conversion of nucleobase, nucleoside and nucleotide derivatives of G to A nucleotides, and in maintaining the intracellular balance of A and G nucleotides.</text>
</comment>
<comment type="catalytic activity">
    <reaction evidence="1">
        <text>IMP + NH4(+) + NADP(+) = GMP + NADPH + 2 H(+)</text>
        <dbReference type="Rhea" id="RHEA:17185"/>
        <dbReference type="ChEBI" id="CHEBI:15378"/>
        <dbReference type="ChEBI" id="CHEBI:28938"/>
        <dbReference type="ChEBI" id="CHEBI:57783"/>
        <dbReference type="ChEBI" id="CHEBI:58053"/>
        <dbReference type="ChEBI" id="CHEBI:58115"/>
        <dbReference type="ChEBI" id="CHEBI:58349"/>
        <dbReference type="EC" id="1.7.1.7"/>
    </reaction>
</comment>
<comment type="subunit">
    <text evidence="1">Homotetramer.</text>
</comment>
<comment type="similarity">
    <text evidence="1">Belongs to the IMPDH/GMPR family. GuaC type 1 subfamily.</text>
</comment>
<organism>
    <name type="scientific">Escherichia coli O127:H6 (strain E2348/69 / EPEC)</name>
    <dbReference type="NCBI Taxonomy" id="574521"/>
    <lineage>
        <taxon>Bacteria</taxon>
        <taxon>Pseudomonadati</taxon>
        <taxon>Pseudomonadota</taxon>
        <taxon>Gammaproteobacteria</taxon>
        <taxon>Enterobacterales</taxon>
        <taxon>Enterobacteriaceae</taxon>
        <taxon>Escherichia</taxon>
    </lineage>
</organism>
<proteinExistence type="inferred from homology"/>